<dbReference type="EMBL" id="AC245506">
    <property type="status" value="NOT_ANNOTATED_CDS"/>
    <property type="molecule type" value="Genomic_DNA"/>
</dbReference>
<dbReference type="SMR" id="A0A0C4DH26"/>
<dbReference type="FunCoup" id="A0A0C4DH26">
    <property type="interactions" value="227"/>
</dbReference>
<dbReference type="GlyGen" id="A0A0C4DH26">
    <property type="glycosylation" value="1 site"/>
</dbReference>
<dbReference type="BioMuta" id="IGKV6D-41"/>
<dbReference type="MassIVE" id="A0A0C4DH26"/>
<dbReference type="Ensembl" id="ENST00000390271.2">
    <property type="protein sequence ID" value="ENSP00000374806.2"/>
    <property type="gene ID" value="ENSG00000211626.2"/>
</dbReference>
<dbReference type="AGR" id="HGNC:5838"/>
<dbReference type="GeneCards" id="IGKV6D-41"/>
<dbReference type="HGNC" id="HGNC:5838">
    <property type="gene designation" value="IGKV6D-41"/>
</dbReference>
<dbReference type="HPA" id="ENSG00000211626">
    <property type="expression patterns" value="Tissue enhanced (cervix, intestine, lymphoid tissue)"/>
</dbReference>
<dbReference type="neXtProt" id="NX_A0A0C4DH26"/>
<dbReference type="VEuPathDB" id="HostDB:ENSG00000211626"/>
<dbReference type="GeneTree" id="ENSGT00940000163546"/>
<dbReference type="HOGENOM" id="CLU_077975_4_1_1"/>
<dbReference type="InParanoid" id="A0A0C4DH26"/>
<dbReference type="OMA" id="YCHQGNS"/>
<dbReference type="OrthoDB" id="9614656at2759"/>
<dbReference type="PAN-GO" id="A0A0C4DH26">
    <property type="GO annotations" value="3 GO annotations based on evolutionary models"/>
</dbReference>
<dbReference type="PhylomeDB" id="A0A0C4DH26"/>
<dbReference type="PRO" id="PR:A0A0C4DH26"/>
<dbReference type="Proteomes" id="UP000005640">
    <property type="component" value="Chromosome 2"/>
</dbReference>
<dbReference type="RNAct" id="A0A0C4DH26">
    <property type="molecule type" value="protein"/>
</dbReference>
<dbReference type="Bgee" id="ENSG00000211626">
    <property type="expression patterns" value="Expressed in mucosa of transverse colon and 53 other cell types or tissues"/>
</dbReference>
<dbReference type="GO" id="GO:0005576">
    <property type="term" value="C:extracellular region"/>
    <property type="evidence" value="ECO:0007669"/>
    <property type="project" value="UniProtKB-SubCell"/>
</dbReference>
<dbReference type="GO" id="GO:0019814">
    <property type="term" value="C:immunoglobulin complex"/>
    <property type="evidence" value="ECO:0000318"/>
    <property type="project" value="GO_Central"/>
</dbReference>
<dbReference type="GO" id="GO:0005886">
    <property type="term" value="C:plasma membrane"/>
    <property type="evidence" value="ECO:0007669"/>
    <property type="project" value="UniProtKB-SubCell"/>
</dbReference>
<dbReference type="GO" id="GO:0002250">
    <property type="term" value="P:adaptive immune response"/>
    <property type="evidence" value="ECO:0007669"/>
    <property type="project" value="UniProtKB-KW"/>
</dbReference>
<dbReference type="GO" id="GO:0006955">
    <property type="term" value="P:immune response"/>
    <property type="evidence" value="ECO:0000318"/>
    <property type="project" value="GO_Central"/>
</dbReference>
<dbReference type="FunFam" id="2.60.40.10:FF:000212">
    <property type="entry name" value="Immunoglobulin kappa chain variable 12-38"/>
    <property type="match status" value="1"/>
</dbReference>
<dbReference type="Gene3D" id="2.60.40.10">
    <property type="entry name" value="Immunoglobulins"/>
    <property type="match status" value="1"/>
</dbReference>
<dbReference type="InterPro" id="IPR007110">
    <property type="entry name" value="Ig-like_dom"/>
</dbReference>
<dbReference type="InterPro" id="IPR036179">
    <property type="entry name" value="Ig-like_dom_sf"/>
</dbReference>
<dbReference type="InterPro" id="IPR013783">
    <property type="entry name" value="Ig-like_fold"/>
</dbReference>
<dbReference type="InterPro" id="IPR003599">
    <property type="entry name" value="Ig_sub"/>
</dbReference>
<dbReference type="InterPro" id="IPR013106">
    <property type="entry name" value="Ig_V-set"/>
</dbReference>
<dbReference type="InterPro" id="IPR050150">
    <property type="entry name" value="IgV_Light_Chain"/>
</dbReference>
<dbReference type="PANTHER" id="PTHR23267">
    <property type="entry name" value="IMMUNOGLOBULIN LIGHT CHAIN"/>
    <property type="match status" value="1"/>
</dbReference>
<dbReference type="Pfam" id="PF07686">
    <property type="entry name" value="V-set"/>
    <property type="match status" value="1"/>
</dbReference>
<dbReference type="SMART" id="SM00409">
    <property type="entry name" value="IG"/>
    <property type="match status" value="1"/>
</dbReference>
<dbReference type="SMART" id="SM00406">
    <property type="entry name" value="IGv"/>
    <property type="match status" value="1"/>
</dbReference>
<dbReference type="SUPFAM" id="SSF48726">
    <property type="entry name" value="Immunoglobulin"/>
    <property type="match status" value="1"/>
</dbReference>
<dbReference type="PROSITE" id="PS50835">
    <property type="entry name" value="IG_LIKE"/>
    <property type="match status" value="1"/>
</dbReference>
<protein>
    <recommendedName>
        <fullName evidence="11">Probable non-functional immunoglobulin kappa variable 6D-41</fullName>
    </recommendedName>
</protein>
<feature type="signal peptide" evidence="2">
    <location>
        <begin position="1"/>
        <end position="20"/>
    </location>
</feature>
<feature type="chain" id="PRO_5002181433" description="Probable non-functional immunoglobulin kappa variable 6D-41" evidence="2">
    <location>
        <begin position="21"/>
        <end position="115"/>
    </location>
</feature>
<feature type="domain" description="Ig-like" evidence="3">
    <location>
        <begin position="21"/>
        <end position="115" status="greater than"/>
    </location>
</feature>
<feature type="region of interest" description="Framework-1" evidence="1">
    <location>
        <begin position="21"/>
        <end position="43"/>
    </location>
</feature>
<feature type="region of interest" description="Complementarity-determining-1" evidence="1">
    <location>
        <begin position="44"/>
        <end position="54"/>
    </location>
</feature>
<feature type="region of interest" description="Framework-2" evidence="1">
    <location>
        <begin position="55"/>
        <end position="69"/>
    </location>
</feature>
<feature type="region of interest" description="Complementarity-determining-2" evidence="1">
    <location>
        <begin position="70"/>
        <end position="76"/>
    </location>
</feature>
<feature type="region of interest" description="Framework-3" evidence="1">
    <location>
        <begin position="77"/>
        <end position="108"/>
    </location>
</feature>
<feature type="region of interest" description="Complementarity-determining-3" evidence="1">
    <location>
        <begin position="109"/>
        <end position="115" status="greater than"/>
    </location>
</feature>
<feature type="disulfide bond" evidence="3">
    <location>
        <begin position="43"/>
        <end position="108"/>
    </location>
</feature>
<feature type="non-terminal residue">
    <location>
        <position position="115"/>
    </location>
</feature>
<keyword id="KW-1064">Adaptive immunity</keyword>
<keyword id="KW-1003">Cell membrane</keyword>
<keyword id="KW-1015">Disulfide bond</keyword>
<keyword id="KW-0391">Immunity</keyword>
<keyword id="KW-1280">Immunoglobulin</keyword>
<keyword id="KW-0393">Immunoglobulin domain</keyword>
<keyword id="KW-0472">Membrane</keyword>
<keyword id="KW-1267">Proteomics identification</keyword>
<keyword id="KW-1185">Reference proteome</keyword>
<keyword id="KW-0964">Secreted</keyword>
<keyword id="KW-0732">Signal</keyword>
<gene>
    <name evidence="4 10 12" type="primary">IGKV6D-41</name>
</gene>
<accession>A0A0C4DH26</accession>
<reference key="1">
    <citation type="journal article" date="2005" name="Nature">
        <title>Generation and annotation of the DNA sequences of human chromosomes 2 and 4.</title>
        <authorList>
            <person name="Hillier L.W."/>
            <person name="Graves T.A."/>
            <person name="Fulton R.S."/>
            <person name="Fulton L.A."/>
            <person name="Pepin K.H."/>
            <person name="Minx P."/>
            <person name="Wagner-McPherson C."/>
            <person name="Layman D."/>
            <person name="Wylie K."/>
            <person name="Sekhon M."/>
            <person name="Becker M.C."/>
            <person name="Fewell G.A."/>
            <person name="Delehaunty K.D."/>
            <person name="Miner T.L."/>
            <person name="Nash W.E."/>
            <person name="Kremitzki C."/>
            <person name="Oddy L."/>
            <person name="Du H."/>
            <person name="Sun H."/>
            <person name="Bradshaw-Cordum H."/>
            <person name="Ali J."/>
            <person name="Carter J."/>
            <person name="Cordes M."/>
            <person name="Harris A."/>
            <person name="Isak A."/>
            <person name="van Brunt A."/>
            <person name="Nguyen C."/>
            <person name="Du F."/>
            <person name="Courtney L."/>
            <person name="Kalicki J."/>
            <person name="Ozersky P."/>
            <person name="Abbott S."/>
            <person name="Armstrong J."/>
            <person name="Belter E.A."/>
            <person name="Caruso L."/>
            <person name="Cedroni M."/>
            <person name="Cotton M."/>
            <person name="Davidson T."/>
            <person name="Desai A."/>
            <person name="Elliott G."/>
            <person name="Erb T."/>
            <person name="Fronick C."/>
            <person name="Gaige T."/>
            <person name="Haakenson W."/>
            <person name="Haglund K."/>
            <person name="Holmes A."/>
            <person name="Harkins R."/>
            <person name="Kim K."/>
            <person name="Kruchowski S.S."/>
            <person name="Strong C.M."/>
            <person name="Grewal N."/>
            <person name="Goyea E."/>
            <person name="Hou S."/>
            <person name="Levy A."/>
            <person name="Martinka S."/>
            <person name="Mead K."/>
            <person name="McLellan M.D."/>
            <person name="Meyer R."/>
            <person name="Randall-Maher J."/>
            <person name="Tomlinson C."/>
            <person name="Dauphin-Kohlberg S."/>
            <person name="Kozlowicz-Reilly A."/>
            <person name="Shah N."/>
            <person name="Swearengen-Shahid S."/>
            <person name="Snider J."/>
            <person name="Strong J.T."/>
            <person name="Thompson J."/>
            <person name="Yoakum M."/>
            <person name="Leonard S."/>
            <person name="Pearman C."/>
            <person name="Trani L."/>
            <person name="Radionenko M."/>
            <person name="Waligorski J.E."/>
            <person name="Wang C."/>
            <person name="Rock S.M."/>
            <person name="Tin-Wollam A.-M."/>
            <person name="Maupin R."/>
            <person name="Latreille P."/>
            <person name="Wendl M.C."/>
            <person name="Yang S.-P."/>
            <person name="Pohl C."/>
            <person name="Wallis J.W."/>
            <person name="Spieth J."/>
            <person name="Bieri T.A."/>
            <person name="Berkowicz N."/>
            <person name="Nelson J.O."/>
            <person name="Osborne J."/>
            <person name="Ding L."/>
            <person name="Meyer R."/>
            <person name="Sabo A."/>
            <person name="Shotland Y."/>
            <person name="Sinha P."/>
            <person name="Wohldmann P.E."/>
            <person name="Cook L.L."/>
            <person name="Hickenbotham M.T."/>
            <person name="Eldred J."/>
            <person name="Williams D."/>
            <person name="Jones T.A."/>
            <person name="She X."/>
            <person name="Ciccarelli F.D."/>
            <person name="Izaurralde E."/>
            <person name="Taylor J."/>
            <person name="Schmutz J."/>
            <person name="Myers R.M."/>
            <person name="Cox D.R."/>
            <person name="Huang X."/>
            <person name="McPherson J.D."/>
            <person name="Mardis E.R."/>
            <person name="Clifton S.W."/>
            <person name="Warren W.C."/>
            <person name="Chinwalla A.T."/>
            <person name="Eddy S.R."/>
            <person name="Marra M.A."/>
            <person name="Ovcharenko I."/>
            <person name="Furey T.S."/>
            <person name="Miller W."/>
            <person name="Eichler E.E."/>
            <person name="Bork P."/>
            <person name="Suyama M."/>
            <person name="Torrents D."/>
            <person name="Waterston R.H."/>
            <person name="Wilson R.K."/>
        </authorList>
    </citation>
    <scope>NUCLEOTIDE SEQUENCE [LARGE SCALE GENOMIC DNA] (IMGT ALLELE IGKV6D-41*01)</scope>
</reference>
<reference key="2">
    <citation type="journal article" date="1998" name="Exp. Clin. Immunogenet.">
        <title>IMGT (ImMunoGeneTics) locus on focus. A new section of Experimental and Clinical Immunogenetics.</title>
        <authorList>
            <person name="Lefranc M.P."/>
        </authorList>
    </citation>
    <scope>CHARACTERIZATION</scope>
</reference>
<reference key="3">
    <citation type="journal article" date="2001" name="Exp. Clin. Immunogenet.">
        <title>Nomenclature of the human immunoglobulin heavy (IGH) genes.</title>
        <authorList>
            <person name="Lefranc M.P."/>
        </authorList>
    </citation>
    <scope>NOMENCLATURE</scope>
</reference>
<reference key="4">
    <citation type="book" date="2001" name="The Immunoglobulin FactsBook.">
        <title>The Immunoglobulin FactsBook.</title>
        <editorList>
            <person name="Lefranc M.P."/>
            <person name="Lefranc G."/>
        </editorList>
        <authorList>
            <person name="Lefranc M.P."/>
            <person name="Lefranc G."/>
        </authorList>
    </citation>
    <scope>NOMENCLATURE</scope>
</reference>
<reference key="5">
    <citation type="journal article" date="2007" name="Annu. Rev. Genet.">
        <title>Immunoglobulin somatic hypermutation.</title>
        <authorList>
            <person name="Teng G."/>
            <person name="Papavasiliou F.N."/>
        </authorList>
    </citation>
    <scope>REVIEW ON SOMATIC HYPERMUTATION</scope>
</reference>
<reference key="6">
    <citation type="journal article" date="2010" name="J. Allergy Clin. Immunol.">
        <title>Structure and function of immunoglobulins.</title>
        <authorList>
            <person name="Schroeder H.W. Jr."/>
            <person name="Cavacini L."/>
        </authorList>
    </citation>
    <scope>REVIEW ON IMMUNOGLOBULINS</scope>
</reference>
<reference key="7">
    <citation type="journal article" date="2012" name="Nat. Rev. Immunol.">
        <title>Molecular programming of B cell memory.</title>
        <authorList>
            <person name="McHeyzer-Williams M."/>
            <person name="Okitsu S."/>
            <person name="Wang N."/>
            <person name="McHeyzer-Williams L."/>
        </authorList>
    </citation>
    <scope>REVIEW ON FUNCTION</scope>
</reference>
<reference key="8">
    <citation type="journal article" date="2014" name="Front. Immunol.">
        <title>Immunoglobulin and T Cell Receptor Genes: IMGT((R)) and the Birth and Rise of Immunoinformatics.</title>
        <authorList>
            <person name="Lefranc M.P."/>
        </authorList>
    </citation>
    <scope>NOMENCLATURE</scope>
</reference>
<name>KVD41_HUMAN</name>
<sequence>MVSPLQFLRLLLLWVPASRGDVVMTQSPAFLSVTPGEKVTITCQASEGIGNYLYWYQQKPDQAPKLLIKYASQSISGVPSRFSGSGSGTDFTFTISSLEAEDAATYYCQQGNKHP</sequence>
<proteinExistence type="evidence at protein level"/>
<comment type="function">
    <text evidence="5 6 7 8 9">Probable non-functional open reading frame (ORF) of V region of the variable domain of immunoglobulin light chains (PubMed:24600447). Non-functional ORF generally cannot participate in the synthesis of a productive immunoglobulin chain due to altered V-(D)-J or switch recombination and/or splicing site (at mRNA level) and/or conserved amino acid change (protein level) (PubMed:9619395). Immunoglobulins, also known as antibodies, are membrane-bound or secreted glycoproteins produced by B lymphocytes. In the recognition phase of humoral immunity, the membrane-bound immunoglobulins serve as receptors which, upon binding of a specific antigen, trigger the clonal expansion and differentiation of B lymphocytes into immunoglobulins-secreting plasma cells. Secreted immunoglobulins mediate the effector phase of humoral immunity, which results in the elimination of bound antigens (PubMed:20176268, PubMed:22158414). The antigen binding site is formed by the variable domain of one heavy chain, together with that of its associated light chain. Thus, each immunoglobulin has two antigen binding sites with remarkable affinity for a particular antigen. The variable domains are assembled by a process called V-(D)-J rearrangement and can then be subjected to somatic hypermutations which, after exposure to antigen and selection, allow affinity maturation for a particular antigen (PubMed:17576170, PubMed:20176268).</text>
</comment>
<comment type="subunit">
    <text evidence="6">Immunoglobulins are composed of two identical heavy chains and two identical light chains; disulfide-linked.</text>
</comment>
<comment type="subcellular location">
    <subcellularLocation>
        <location evidence="6 7">Secreted</location>
    </subcellularLocation>
    <subcellularLocation>
        <location evidence="6 7">Cell membrane</location>
    </subcellularLocation>
</comment>
<comment type="polymorphism">
    <text evidence="11">There are several alleles. The sequence shown is that of IMGT allele IGKV6D-41*01.</text>
</comment>
<comment type="caution">
    <text evidence="9 11">Most probably a non-functional protein that cannot participate in the synthesis of a productive immunoglobulin chain due to an unusual recombination signal (RS) sequence altering V-(D)-J recombination (PubMed:9619395).</text>
</comment>
<organism>
    <name type="scientific">Homo sapiens</name>
    <name type="common">Human</name>
    <dbReference type="NCBI Taxonomy" id="9606"/>
    <lineage>
        <taxon>Eukaryota</taxon>
        <taxon>Metazoa</taxon>
        <taxon>Chordata</taxon>
        <taxon>Craniata</taxon>
        <taxon>Vertebrata</taxon>
        <taxon>Euteleostomi</taxon>
        <taxon>Mammalia</taxon>
        <taxon>Eutheria</taxon>
        <taxon>Euarchontoglires</taxon>
        <taxon>Primates</taxon>
        <taxon>Haplorrhini</taxon>
        <taxon>Catarrhini</taxon>
        <taxon>Hominidae</taxon>
        <taxon>Homo</taxon>
    </lineage>
</organism>
<evidence type="ECO:0000250" key="1">
    <source>
        <dbReference type="UniProtKB" id="P01602"/>
    </source>
</evidence>
<evidence type="ECO:0000255" key="2"/>
<evidence type="ECO:0000255" key="3">
    <source>
        <dbReference type="PROSITE-ProRule" id="PRU00114"/>
    </source>
</evidence>
<evidence type="ECO:0000303" key="4">
    <source>
    </source>
</evidence>
<evidence type="ECO:0000303" key="5">
    <source>
    </source>
</evidence>
<evidence type="ECO:0000303" key="6">
    <source>
    </source>
</evidence>
<evidence type="ECO:0000303" key="7">
    <source>
    </source>
</evidence>
<evidence type="ECO:0000303" key="8">
    <source>
    </source>
</evidence>
<evidence type="ECO:0000303" key="9">
    <source>
    </source>
</evidence>
<evidence type="ECO:0000303" key="10">
    <source ref="4"/>
</evidence>
<evidence type="ECO:0000305" key="11"/>
<evidence type="ECO:0000312" key="12">
    <source>
        <dbReference type="HGNC" id="HGNC:5838"/>
    </source>
</evidence>